<reference key="1">
    <citation type="journal article" date="1990" name="J. Virol.">
        <title>Molecular characterization of an attenuated human immunodeficiency virus type 2 isolate.</title>
        <authorList>
            <person name="Kumar P."/>
            <person name="Hui H."/>
            <person name="Kappes J.C."/>
            <person name="Haggarty B.S."/>
            <person name="Hoxie J.A."/>
            <person name="Arya S.K."/>
            <person name="Shaw G.M."/>
            <person name="Hahn B.H."/>
        </authorList>
    </citation>
    <scope>NUCLEOTIDE SEQUENCE [GENOMIC DNA]</scope>
</reference>
<protein>
    <recommendedName>
        <fullName>Protein Rev</fullName>
    </recommendedName>
    <alternativeName>
        <fullName>Regulator of expression of viral proteins</fullName>
    </alternativeName>
</protein>
<organism>
    <name type="scientific">Human immunodeficiency virus type 2 subtype A (isolate ST)</name>
    <name type="common">HIV-2</name>
    <dbReference type="NCBI Taxonomy" id="11721"/>
    <lineage>
        <taxon>Viruses</taxon>
        <taxon>Riboviria</taxon>
        <taxon>Pararnavirae</taxon>
        <taxon>Artverviricota</taxon>
        <taxon>Revtraviricetes</taxon>
        <taxon>Ortervirales</taxon>
        <taxon>Retroviridae</taxon>
        <taxon>Orthoretrovirinae</taxon>
        <taxon>Lentivirus</taxon>
        <taxon>Human immunodeficiency virus 2</taxon>
    </lineage>
</organism>
<sequence length="107" mass="12576">MNERAEEEELRRKLRLIRLLHQTNPYPQGPGTASQRRNRRRRWKQRWRQLVALADKIYTFPDPPADSPLEQTIQHLQGLTIQELPDPPTNLPESSESIDSSQRLAEI</sequence>
<dbReference type="EMBL" id="M31113">
    <property type="protein sequence ID" value="AAB01357.1"/>
    <property type="molecule type" value="Genomic_DNA"/>
</dbReference>
<dbReference type="PIR" id="G33943">
    <property type="entry name" value="VKLJST"/>
</dbReference>
<dbReference type="SMR" id="P20870"/>
<dbReference type="Proteomes" id="UP000007713">
    <property type="component" value="Segment"/>
</dbReference>
<dbReference type="GO" id="GO:0030430">
    <property type="term" value="C:host cell cytoplasm"/>
    <property type="evidence" value="ECO:0007669"/>
    <property type="project" value="UniProtKB-SubCell"/>
</dbReference>
<dbReference type="GO" id="GO:0044196">
    <property type="term" value="C:host cell nucleolus"/>
    <property type="evidence" value="ECO:0007669"/>
    <property type="project" value="UniProtKB-SubCell"/>
</dbReference>
<dbReference type="GO" id="GO:0003700">
    <property type="term" value="F:DNA-binding transcription factor activity"/>
    <property type="evidence" value="ECO:0007669"/>
    <property type="project" value="InterPro"/>
</dbReference>
<dbReference type="GO" id="GO:0003723">
    <property type="term" value="F:RNA binding"/>
    <property type="evidence" value="ECO:0007669"/>
    <property type="project" value="UniProtKB-KW"/>
</dbReference>
<dbReference type="GO" id="GO:0051028">
    <property type="term" value="P:mRNA transport"/>
    <property type="evidence" value="ECO:0007669"/>
    <property type="project" value="UniProtKB-KW"/>
</dbReference>
<dbReference type="Gene3D" id="6.10.140.630">
    <property type="match status" value="1"/>
</dbReference>
<dbReference type="InterPro" id="IPR000625">
    <property type="entry name" value="REV_protein"/>
</dbReference>
<dbReference type="Pfam" id="PF00424">
    <property type="entry name" value="REV"/>
    <property type="match status" value="1"/>
</dbReference>
<gene>
    <name type="primary">rev</name>
</gene>
<organismHost>
    <name type="scientific">Homo sapiens</name>
    <name type="common">Human</name>
    <dbReference type="NCBI Taxonomy" id="9606"/>
</organismHost>
<proteinExistence type="inferred from homology"/>
<comment type="function">
    <text evidence="1">Escorts unspliced or incompletely spliced viral pre-mRNAs (late transcripts) out of the nucleus of infected cells. These pre-mRNAs carry a recognition sequence called Rev responsive element (RRE) located in the env gene, that is not present in fully spliced viral mRNAs (early transcripts). This function is essential since most viral proteins are translated from unspliced or partially spliced pre-mRNAs which cannot exit the nucleus by the pathway used by fully processed cellular mRNAs (By similarity).</text>
</comment>
<comment type="subunit">
    <text evidence="1">Homomultimer; when bound to the RRE. Multimeric assembly is essential for activity (By similarity).</text>
</comment>
<comment type="subcellular location">
    <subcellularLocation>
        <location>Host nucleus</location>
        <location>Host nucleolus</location>
    </subcellularLocation>
    <subcellularLocation>
        <location>Host cytoplasm</location>
    </subcellularLocation>
    <text evidence="1">The presence of both nuclear import and nuclear export signals leads to continuous shuttling between the nucleus and cytoplasm.</text>
</comment>
<comment type="domain">
    <text evidence="1">The RNA-binding motif binds to the RRE, a stem-and-loop structure present in incompletely spliced viral pre-mRNAs. This region also contains the NLS which mediates nuclear localization. These overlapping functions prevent Rev bound to RRE from undesirable return to the nucleus. When Rev binds the RRE, the NLS becomes masked while the NES remains accessible (By similarity).</text>
</comment>
<accession>P20870</accession>
<feature type="chain" id="PRO_0000085290" description="Protein Rev">
    <location>
        <begin position="1"/>
        <end position="107"/>
    </location>
</feature>
<feature type="region of interest" description="Homomultimerization" evidence="1">
    <location>
        <begin position="16"/>
        <end position="24"/>
    </location>
</feature>
<feature type="region of interest" description="Disordered" evidence="2">
    <location>
        <begin position="20"/>
        <end position="40"/>
    </location>
</feature>
<feature type="region of interest" description="Disordered" evidence="2">
    <location>
        <begin position="82"/>
        <end position="107"/>
    </location>
</feature>
<feature type="short sequence motif" description="Nuclear localization signal and RNA-binding (RRE)" evidence="1">
    <location>
        <begin position="35"/>
        <end position="49"/>
    </location>
</feature>
<feature type="short sequence motif" description="Nuclear export signal and binding to XPO1" evidence="1">
    <location>
        <begin position="71"/>
        <end position="82"/>
    </location>
</feature>
<feature type="compositionally biased region" description="Polar residues" evidence="2">
    <location>
        <begin position="21"/>
        <end position="34"/>
    </location>
</feature>
<feature type="compositionally biased region" description="Polar residues" evidence="2">
    <location>
        <begin position="91"/>
        <end position="107"/>
    </location>
</feature>
<name>REV_HV2ST</name>
<evidence type="ECO:0000250" key="1"/>
<evidence type="ECO:0000256" key="2">
    <source>
        <dbReference type="SAM" id="MobiDB-lite"/>
    </source>
</evidence>
<keyword id="KW-0014">AIDS</keyword>
<keyword id="KW-1035">Host cytoplasm</keyword>
<keyword id="KW-1048">Host nucleus</keyword>
<keyword id="KW-0509">mRNA transport</keyword>
<keyword id="KW-0694">RNA-binding</keyword>
<keyword id="KW-0813">Transport</keyword>